<proteinExistence type="inferred from homology"/>
<keyword id="KW-0963">Cytoplasm</keyword>
<keyword id="KW-0378">Hydrolase</keyword>
<keyword id="KW-0645">Protease</keyword>
<keyword id="KW-1185">Reference proteome</keyword>
<keyword id="KW-0720">Serine protease</keyword>
<reference key="1">
    <citation type="journal article" date="2004" name="Nucleic Acids Res.">
        <title>Genome sequence of Symbiobacterium thermophilum, an uncultivable bacterium that depends on microbial commensalism.</title>
        <authorList>
            <person name="Ueda K."/>
            <person name="Yamashita A."/>
            <person name="Ishikawa J."/>
            <person name="Shimada M."/>
            <person name="Watsuji T."/>
            <person name="Morimura K."/>
            <person name="Ikeda H."/>
            <person name="Hattori M."/>
            <person name="Beppu T."/>
        </authorList>
    </citation>
    <scope>NUCLEOTIDE SEQUENCE [LARGE SCALE GENOMIC DNA]</scope>
    <source>
        <strain>DSM 24528 / JCM 14929 / IAM 14863 / T</strain>
    </source>
</reference>
<evidence type="ECO:0000255" key="1">
    <source>
        <dbReference type="HAMAP-Rule" id="MF_00444"/>
    </source>
</evidence>
<name>CLPP1_SYMTH</name>
<accession>Q67SK0</accession>
<gene>
    <name evidence="1" type="primary">clpP1</name>
    <name type="ordered locus">STH358</name>
</gene>
<dbReference type="EC" id="3.4.21.92" evidence="1"/>
<dbReference type="EMBL" id="AP006840">
    <property type="protein sequence ID" value="BAD39343.1"/>
    <property type="molecule type" value="Genomic_DNA"/>
</dbReference>
<dbReference type="RefSeq" id="WP_011194492.1">
    <property type="nucleotide sequence ID" value="NC_006177.1"/>
</dbReference>
<dbReference type="SMR" id="Q67SK0"/>
<dbReference type="STRING" id="292459.STH358"/>
<dbReference type="MEROPS" id="S14.001"/>
<dbReference type="KEGG" id="sth:STH358"/>
<dbReference type="eggNOG" id="COG0740">
    <property type="taxonomic scope" value="Bacteria"/>
</dbReference>
<dbReference type="HOGENOM" id="CLU_058707_3_2_9"/>
<dbReference type="OrthoDB" id="9802800at2"/>
<dbReference type="Proteomes" id="UP000000417">
    <property type="component" value="Chromosome"/>
</dbReference>
<dbReference type="GO" id="GO:0005737">
    <property type="term" value="C:cytoplasm"/>
    <property type="evidence" value="ECO:0007669"/>
    <property type="project" value="UniProtKB-SubCell"/>
</dbReference>
<dbReference type="GO" id="GO:0009368">
    <property type="term" value="C:endopeptidase Clp complex"/>
    <property type="evidence" value="ECO:0007669"/>
    <property type="project" value="TreeGrafter"/>
</dbReference>
<dbReference type="GO" id="GO:0004176">
    <property type="term" value="F:ATP-dependent peptidase activity"/>
    <property type="evidence" value="ECO:0007669"/>
    <property type="project" value="InterPro"/>
</dbReference>
<dbReference type="GO" id="GO:0051117">
    <property type="term" value="F:ATPase binding"/>
    <property type="evidence" value="ECO:0007669"/>
    <property type="project" value="TreeGrafter"/>
</dbReference>
<dbReference type="GO" id="GO:0004252">
    <property type="term" value="F:serine-type endopeptidase activity"/>
    <property type="evidence" value="ECO:0007669"/>
    <property type="project" value="UniProtKB-UniRule"/>
</dbReference>
<dbReference type="GO" id="GO:0006515">
    <property type="term" value="P:protein quality control for misfolded or incompletely synthesized proteins"/>
    <property type="evidence" value="ECO:0007669"/>
    <property type="project" value="TreeGrafter"/>
</dbReference>
<dbReference type="CDD" id="cd07017">
    <property type="entry name" value="S14_ClpP_2"/>
    <property type="match status" value="1"/>
</dbReference>
<dbReference type="FunFam" id="3.90.226.10:FF:000001">
    <property type="entry name" value="ATP-dependent Clp protease proteolytic subunit"/>
    <property type="match status" value="1"/>
</dbReference>
<dbReference type="Gene3D" id="3.90.226.10">
    <property type="entry name" value="2-enoyl-CoA Hydratase, Chain A, domain 1"/>
    <property type="match status" value="1"/>
</dbReference>
<dbReference type="HAMAP" id="MF_00444">
    <property type="entry name" value="ClpP"/>
    <property type="match status" value="1"/>
</dbReference>
<dbReference type="InterPro" id="IPR001907">
    <property type="entry name" value="ClpP"/>
</dbReference>
<dbReference type="InterPro" id="IPR029045">
    <property type="entry name" value="ClpP/crotonase-like_dom_sf"/>
</dbReference>
<dbReference type="InterPro" id="IPR023562">
    <property type="entry name" value="ClpP/TepA"/>
</dbReference>
<dbReference type="InterPro" id="IPR033135">
    <property type="entry name" value="ClpP_His_AS"/>
</dbReference>
<dbReference type="InterPro" id="IPR018215">
    <property type="entry name" value="ClpP_Ser_AS"/>
</dbReference>
<dbReference type="NCBIfam" id="NF001368">
    <property type="entry name" value="PRK00277.1"/>
    <property type="match status" value="1"/>
</dbReference>
<dbReference type="NCBIfam" id="NF009205">
    <property type="entry name" value="PRK12553.1"/>
    <property type="match status" value="1"/>
</dbReference>
<dbReference type="PANTHER" id="PTHR10381">
    <property type="entry name" value="ATP-DEPENDENT CLP PROTEASE PROTEOLYTIC SUBUNIT"/>
    <property type="match status" value="1"/>
</dbReference>
<dbReference type="PANTHER" id="PTHR10381:SF70">
    <property type="entry name" value="ATP-DEPENDENT CLP PROTEASE PROTEOLYTIC SUBUNIT"/>
    <property type="match status" value="1"/>
</dbReference>
<dbReference type="Pfam" id="PF00574">
    <property type="entry name" value="CLP_protease"/>
    <property type="match status" value="1"/>
</dbReference>
<dbReference type="PRINTS" id="PR00127">
    <property type="entry name" value="CLPPROTEASEP"/>
</dbReference>
<dbReference type="SUPFAM" id="SSF52096">
    <property type="entry name" value="ClpP/crotonase"/>
    <property type="match status" value="1"/>
</dbReference>
<dbReference type="PROSITE" id="PS00382">
    <property type="entry name" value="CLP_PROTEASE_HIS"/>
    <property type="match status" value="1"/>
</dbReference>
<dbReference type="PROSITE" id="PS00381">
    <property type="entry name" value="CLP_PROTEASE_SER"/>
    <property type="match status" value="1"/>
</dbReference>
<feature type="chain" id="PRO_0000179679" description="ATP-dependent Clp protease proteolytic subunit 1">
    <location>
        <begin position="1"/>
        <end position="202"/>
    </location>
</feature>
<feature type="active site" description="Nucleophile" evidence="1">
    <location>
        <position position="99"/>
    </location>
</feature>
<feature type="active site" evidence="1">
    <location>
        <position position="123"/>
    </location>
</feature>
<protein>
    <recommendedName>
        <fullName evidence="1">ATP-dependent Clp protease proteolytic subunit 1</fullName>
        <ecNumber evidence="1">3.4.21.92</ecNumber>
    </recommendedName>
    <alternativeName>
        <fullName evidence="1">Endopeptidase Clp 1</fullName>
    </alternativeName>
</protein>
<organism>
    <name type="scientific">Symbiobacterium thermophilum (strain DSM 24528 / JCM 14929 / IAM 14863 / T)</name>
    <dbReference type="NCBI Taxonomy" id="292459"/>
    <lineage>
        <taxon>Bacteria</taxon>
        <taxon>Bacillati</taxon>
        <taxon>Bacillota</taxon>
        <taxon>Clostridia</taxon>
        <taxon>Eubacteriales</taxon>
        <taxon>Symbiobacteriaceae</taxon>
        <taxon>Symbiobacterium</taxon>
    </lineage>
</organism>
<sequence>MSYLIPYVIEQTNRGERSYDIYSRLLKDRIVFLGTPIDDQVANVVIAQLLFLESEDPDKPVNLYINSPGGSVSAGLGIYDAMQHIKSPVNTTVVGMAASMAALLLAAGTGKRYALPNARVMIHQPHLSGVGGQVTDIEITAREAVKTKQLMAEILAKHSGQSVERILADTERDRWMSAQEAVEYGLVDEVLHPREKASRSAR</sequence>
<comment type="function">
    <text evidence="1">Cleaves peptides in various proteins in a process that requires ATP hydrolysis. Has a chymotrypsin-like activity. Plays a major role in the degradation of misfolded proteins.</text>
</comment>
<comment type="catalytic activity">
    <reaction evidence="1">
        <text>Hydrolysis of proteins to small peptides in the presence of ATP and magnesium. alpha-casein is the usual test substrate. In the absence of ATP, only oligopeptides shorter than five residues are hydrolyzed (such as succinyl-Leu-Tyr-|-NHMec, and Leu-Tyr-Leu-|-Tyr-Trp, in which cleavage of the -Tyr-|-Leu- and -Tyr-|-Trp bonds also occurs).</text>
        <dbReference type="EC" id="3.4.21.92"/>
    </reaction>
</comment>
<comment type="subunit">
    <text evidence="1">Fourteen ClpP subunits assemble into 2 heptameric rings which stack back to back to give a disk-like structure with a central cavity, resembling the structure of eukaryotic proteasomes.</text>
</comment>
<comment type="subcellular location">
    <subcellularLocation>
        <location evidence="1">Cytoplasm</location>
    </subcellularLocation>
</comment>
<comment type="similarity">
    <text evidence="1">Belongs to the peptidase S14 family.</text>
</comment>